<proteinExistence type="inferred from homology"/>
<dbReference type="EC" id="3.5.3.6" evidence="1"/>
<dbReference type="EMBL" id="CP000857">
    <property type="protein sequence ID" value="ACN48648.1"/>
    <property type="molecule type" value="Genomic_DNA"/>
</dbReference>
<dbReference type="SMR" id="C0Q7C5"/>
<dbReference type="KEGG" id="sei:SPC_4599"/>
<dbReference type="HOGENOM" id="CLU_052662_0_0_6"/>
<dbReference type="UniPathway" id="UPA00254">
    <property type="reaction ID" value="UER00364"/>
</dbReference>
<dbReference type="Proteomes" id="UP000001599">
    <property type="component" value="Chromosome"/>
</dbReference>
<dbReference type="GO" id="GO:0005737">
    <property type="term" value="C:cytoplasm"/>
    <property type="evidence" value="ECO:0007669"/>
    <property type="project" value="UniProtKB-SubCell"/>
</dbReference>
<dbReference type="GO" id="GO:0016990">
    <property type="term" value="F:arginine deiminase activity"/>
    <property type="evidence" value="ECO:0007669"/>
    <property type="project" value="UniProtKB-UniRule"/>
</dbReference>
<dbReference type="GO" id="GO:0019547">
    <property type="term" value="P:arginine catabolic process to ornithine"/>
    <property type="evidence" value="ECO:0007669"/>
    <property type="project" value="UniProtKB-UniRule"/>
</dbReference>
<dbReference type="GO" id="GO:0019546">
    <property type="term" value="P:arginine deiminase pathway"/>
    <property type="evidence" value="ECO:0007669"/>
    <property type="project" value="TreeGrafter"/>
</dbReference>
<dbReference type="FunFam" id="1.10.3930.10:FF:000002">
    <property type="entry name" value="Arginine deiminase"/>
    <property type="match status" value="1"/>
</dbReference>
<dbReference type="Gene3D" id="1.10.3930.10">
    <property type="entry name" value="Arginine deiminase"/>
    <property type="match status" value="1"/>
</dbReference>
<dbReference type="Gene3D" id="3.75.10.10">
    <property type="entry name" value="L-arginine/glycine Amidinotransferase, Chain A"/>
    <property type="match status" value="1"/>
</dbReference>
<dbReference type="HAMAP" id="MF_00242">
    <property type="entry name" value="Arg_deiminase"/>
    <property type="match status" value="1"/>
</dbReference>
<dbReference type="InterPro" id="IPR003876">
    <property type="entry name" value="Arg_deiminase"/>
</dbReference>
<dbReference type="NCBIfam" id="TIGR01078">
    <property type="entry name" value="arcA"/>
    <property type="match status" value="1"/>
</dbReference>
<dbReference type="NCBIfam" id="NF002381">
    <property type="entry name" value="PRK01388.1"/>
    <property type="match status" value="1"/>
</dbReference>
<dbReference type="PANTHER" id="PTHR47271">
    <property type="entry name" value="ARGININE DEIMINASE"/>
    <property type="match status" value="1"/>
</dbReference>
<dbReference type="PANTHER" id="PTHR47271:SF2">
    <property type="entry name" value="ARGININE DEIMINASE"/>
    <property type="match status" value="1"/>
</dbReference>
<dbReference type="Pfam" id="PF02274">
    <property type="entry name" value="ADI"/>
    <property type="match status" value="1"/>
</dbReference>
<dbReference type="PIRSF" id="PIRSF006356">
    <property type="entry name" value="Arg_deiminase"/>
    <property type="match status" value="1"/>
</dbReference>
<dbReference type="PRINTS" id="PR01466">
    <property type="entry name" value="ARGDEIMINASE"/>
</dbReference>
<dbReference type="SUPFAM" id="SSF55909">
    <property type="entry name" value="Pentein"/>
    <property type="match status" value="1"/>
</dbReference>
<protein>
    <recommendedName>
        <fullName evidence="1">Arginine deiminase</fullName>
        <shortName evidence="1">ADI</shortName>
        <ecNumber evidence="1">3.5.3.6</ecNumber>
    </recommendedName>
    <alternativeName>
        <fullName evidence="1">Arginine dihydrolase</fullName>
        <shortName evidence="1">AD</shortName>
    </alternativeName>
</protein>
<evidence type="ECO:0000255" key="1">
    <source>
        <dbReference type="HAMAP-Rule" id="MF_00242"/>
    </source>
</evidence>
<name>ARCA_SALPC</name>
<accession>C0Q7C5</accession>
<feature type="chain" id="PRO_1000125321" description="Arginine deiminase">
    <location>
        <begin position="1"/>
        <end position="407"/>
    </location>
</feature>
<feature type="active site" description="Amidino-cysteine intermediate" evidence="1">
    <location>
        <position position="397"/>
    </location>
</feature>
<gene>
    <name evidence="1" type="primary">arcA</name>
    <name type="ordered locus">SPC_4599</name>
</gene>
<comment type="catalytic activity">
    <reaction evidence="1">
        <text>L-arginine + H2O = L-citrulline + NH4(+)</text>
        <dbReference type="Rhea" id="RHEA:19597"/>
        <dbReference type="ChEBI" id="CHEBI:15377"/>
        <dbReference type="ChEBI" id="CHEBI:28938"/>
        <dbReference type="ChEBI" id="CHEBI:32682"/>
        <dbReference type="ChEBI" id="CHEBI:57743"/>
        <dbReference type="EC" id="3.5.3.6"/>
    </reaction>
</comment>
<comment type="pathway">
    <text evidence="1">Amino-acid degradation; L-arginine degradation via ADI pathway; carbamoyl phosphate from L-arginine: step 1/2.</text>
</comment>
<comment type="subcellular location">
    <subcellularLocation>
        <location evidence="1">Cytoplasm</location>
    </subcellularLocation>
</comment>
<comment type="similarity">
    <text evidence="1">Belongs to the arginine deiminase family.</text>
</comment>
<sequence>MMEKHFVGSEIGQLRSVMLHRPNLSLKRLTPSNCQELLFDDVLSVERAGEEHDIFANTLRQQGIEVLLLTDLLTQTLDVADAKAWLLDTQISDYRLGPTFAADIRAWLADMPHRELARHLSGGLTYGEIPASIKNMVVDTHDINDFIMKPLPNHLFTRDTSCWIYNGVSINPMAKPARQRETNNLRAIYRWHPQFAGGDFIKYFGDEDINYDHATLEGGDVLVIGRGAVLIGMSERTTPQGVEFLAQALFKHRQAERVIAVELPKHRSCMHLDTVMTHIDIDTFSVYPEVVRPDVQCWTLTPDGRGGLKRTQESTLVHALEKALGIDQVRLITTGGDAFEAEREQWNDANNVLTLRPGVVVGYERNIWTNEKYDKAGITVLPIPGDELGRGRGGARCMSCPLERDGI</sequence>
<organism>
    <name type="scientific">Salmonella paratyphi C (strain RKS4594)</name>
    <dbReference type="NCBI Taxonomy" id="476213"/>
    <lineage>
        <taxon>Bacteria</taxon>
        <taxon>Pseudomonadati</taxon>
        <taxon>Pseudomonadota</taxon>
        <taxon>Gammaproteobacteria</taxon>
        <taxon>Enterobacterales</taxon>
        <taxon>Enterobacteriaceae</taxon>
        <taxon>Salmonella</taxon>
    </lineage>
</organism>
<keyword id="KW-0056">Arginine metabolism</keyword>
<keyword id="KW-0963">Cytoplasm</keyword>
<keyword id="KW-0378">Hydrolase</keyword>
<reference key="1">
    <citation type="journal article" date="2009" name="PLoS ONE">
        <title>Salmonella paratyphi C: genetic divergence from Salmonella choleraesuis and pathogenic convergence with Salmonella typhi.</title>
        <authorList>
            <person name="Liu W.-Q."/>
            <person name="Feng Y."/>
            <person name="Wang Y."/>
            <person name="Zou Q.-H."/>
            <person name="Chen F."/>
            <person name="Guo J.-T."/>
            <person name="Peng Y.-H."/>
            <person name="Jin Y."/>
            <person name="Li Y.-G."/>
            <person name="Hu S.-N."/>
            <person name="Johnston R.N."/>
            <person name="Liu G.-R."/>
            <person name="Liu S.-L."/>
        </authorList>
    </citation>
    <scope>NUCLEOTIDE SEQUENCE [LARGE SCALE GENOMIC DNA]</scope>
    <source>
        <strain>RKS4594</strain>
    </source>
</reference>